<protein>
    <recommendedName>
        <fullName evidence="2">Cyanuric acid amidohydrolase</fullName>
        <shortName evidence="2">CAH</shortName>
        <ecNumber evidence="2 3">3.5.2.15</ecNumber>
    </recommendedName>
</protein>
<dbReference type="EC" id="3.5.2.15" evidence="2 3"/>
<dbReference type="EMBL" id="AM236084">
    <property type="protein sequence ID" value="CAK10579.1"/>
    <property type="molecule type" value="Genomic_DNA"/>
</dbReference>
<dbReference type="SMR" id="Q1M7F3"/>
<dbReference type="EnsemblBacteria" id="CAK10579">
    <property type="protein sequence ID" value="CAK10579"/>
    <property type="gene ID" value="pRL100353"/>
</dbReference>
<dbReference type="KEGG" id="rle:pRL100353"/>
<dbReference type="HOGENOM" id="CLU_808206_0_0_5"/>
<dbReference type="BioCyc" id="MetaCyc:MONOMER-20659"/>
<dbReference type="SABIO-RK" id="Q1M7F3"/>
<dbReference type="UniPathway" id="UPA00008">
    <property type="reaction ID" value="UER00502"/>
</dbReference>
<dbReference type="Proteomes" id="UP000006575">
    <property type="component" value="Plasmid pRL10"/>
</dbReference>
<dbReference type="GO" id="GO:0018753">
    <property type="term" value="F:cyanuric acid amidohydrolase activity"/>
    <property type="evidence" value="ECO:0007669"/>
    <property type="project" value="UniProtKB-UniRule"/>
</dbReference>
<dbReference type="GO" id="GO:0046872">
    <property type="term" value="F:metal ion binding"/>
    <property type="evidence" value="ECO:0007669"/>
    <property type="project" value="UniProtKB-UniRule"/>
</dbReference>
<dbReference type="GO" id="GO:0019381">
    <property type="term" value="P:atrazine catabolic process"/>
    <property type="evidence" value="ECO:0007669"/>
    <property type="project" value="UniProtKB-UniRule"/>
</dbReference>
<dbReference type="Gene3D" id="3.30.1330.160">
    <property type="entry name" value="Cyanuric acid hydrolase/Barbituras, RU C"/>
    <property type="match status" value="1"/>
</dbReference>
<dbReference type="Gene3D" id="3.30.1330.170">
    <property type="entry name" value="Cyanuric acid hydrolase/Barbiturase, RU A"/>
    <property type="match status" value="1"/>
</dbReference>
<dbReference type="Gene3D" id="3.30.1330.180">
    <property type="entry name" value="Cyanuric acid hydrolase/Barbiturase, RU B"/>
    <property type="match status" value="1"/>
</dbReference>
<dbReference type="HAMAP" id="MF_01989">
    <property type="entry name" value="Cyc_amidohydrol"/>
    <property type="match status" value="1"/>
</dbReference>
<dbReference type="InterPro" id="IPR014086">
    <property type="entry name" value="AtzD/Barbiturase"/>
</dbReference>
<dbReference type="InterPro" id="IPR043008">
    <property type="entry name" value="AtzD/Barbiturase_RUA"/>
</dbReference>
<dbReference type="InterPro" id="IPR043006">
    <property type="entry name" value="AtzD/Barbiturase_RUB"/>
</dbReference>
<dbReference type="InterPro" id="IPR043007">
    <property type="entry name" value="AtzD/Barbiturase_RUC"/>
</dbReference>
<dbReference type="NCBIfam" id="TIGR02714">
    <property type="entry name" value="amido_AtzD_TrzD"/>
    <property type="match status" value="1"/>
</dbReference>
<dbReference type="Pfam" id="PF09663">
    <property type="entry name" value="Amido_AtzD_TrzD"/>
    <property type="match status" value="1"/>
</dbReference>
<organism>
    <name type="scientific">Rhizobium johnstonii (strain DSM 114642 / LMG 32736 / 3841)</name>
    <name type="common">Rhizobium leguminosarum bv. viciae</name>
    <dbReference type="NCBI Taxonomy" id="216596"/>
    <lineage>
        <taxon>Bacteria</taxon>
        <taxon>Pseudomonadati</taxon>
        <taxon>Pseudomonadota</taxon>
        <taxon>Alphaproteobacteria</taxon>
        <taxon>Hyphomicrobiales</taxon>
        <taxon>Rhizobiaceae</taxon>
        <taxon>Rhizobium/Agrobacterium group</taxon>
        <taxon>Rhizobium</taxon>
        <taxon>Rhizobium johnstonii</taxon>
    </lineage>
</organism>
<sequence>MPSLRAHVFRVPADGPDDVAGVEALFASGLQANNIVAVLGKTEGNGCVNDFTRGYATRSFETLFSRYGVDGVSIIMSGGTEGALSPHWTVFARETVETPGERALAIGVSRTPALSPEHLGRREQILLVAEGVKSAMRDAGIDDPADAHFVQIKCPLLTSRRIAEAEAAGRTVATHDTLKSMGLSRGASALGVAVALGEIDATSINDADICTRFDLFSRCASTSSGVELTDHEIIVLGMSAKWSGPLSIDHAVMRDAIDAHSVRKARERLPENSRLAAVLAKAEPDPSGEIDGRRHTMLDDSDIAGTRHARAFVGGVLAGIFGITDLYVSGGAEHQGPPGGGPVAIIVEKEQ</sequence>
<gene>
    <name type="ordered locus">pRL100353</name>
</gene>
<name>CAH_RHIJ3</name>
<evidence type="ECO:0000250" key="1">
    <source>
        <dbReference type="UniProtKB" id="P58329"/>
    </source>
</evidence>
<evidence type="ECO:0000255" key="2">
    <source>
        <dbReference type="HAMAP-Rule" id="MF_01989"/>
    </source>
</evidence>
<evidence type="ECO:0000269" key="3">
    <source>
    </source>
</evidence>
<evidence type="ECO:0000305" key="4"/>
<proteinExistence type="evidence at protein level"/>
<accession>Q1M7F3</accession>
<feature type="chain" id="PRO_0000439918" description="Cyanuric acid amidohydrolase">
    <location>
        <begin position="1"/>
        <end position="351"/>
    </location>
</feature>
<feature type="region of interest" description="RU A" evidence="2">
    <location>
        <begin position="1"/>
        <end position="96"/>
    </location>
</feature>
<feature type="region of interest" description="RU B" evidence="2">
    <location>
        <begin position="103"/>
        <end position="240"/>
    </location>
</feature>
<feature type="region of interest" description="RU C" evidence="2">
    <location>
        <begin position="246"/>
        <end position="351"/>
    </location>
</feature>
<feature type="active site" evidence="2">
    <location>
        <position position="153"/>
    </location>
</feature>
<feature type="active site" description="Nucleophile" evidence="2">
    <location>
        <position position="223"/>
    </location>
</feature>
<feature type="binding site" evidence="2">
    <location>
        <position position="53"/>
    </location>
    <ligand>
        <name>substrate</name>
    </ligand>
</feature>
<feature type="binding site" evidence="2">
    <location>
        <begin position="77"/>
        <end position="78"/>
    </location>
    <ligand>
        <name>substrate</name>
    </ligand>
</feature>
<feature type="binding site" evidence="2">
    <location>
        <position position="185"/>
    </location>
    <ligand>
        <name>substrate</name>
    </ligand>
</feature>
<feature type="binding site" evidence="2">
    <location>
        <begin position="223"/>
        <end position="224"/>
    </location>
    <ligand>
        <name>substrate</name>
    </ligand>
</feature>
<feature type="binding site" evidence="2">
    <location>
        <position position="283"/>
    </location>
    <ligand>
        <name>Mg(2+)</name>
        <dbReference type="ChEBI" id="CHEBI:18420"/>
        <note>structural</note>
    </ligand>
</feature>
<feature type="binding site" evidence="2">
    <location>
        <position position="310"/>
    </location>
    <ligand>
        <name>substrate</name>
    </ligand>
</feature>
<feature type="binding site" evidence="2">
    <location>
        <begin position="329"/>
        <end position="330"/>
    </location>
    <ligand>
        <name>substrate</name>
    </ligand>
</feature>
<feature type="binding site" evidence="2">
    <location>
        <position position="332"/>
    </location>
    <ligand>
        <name>Mg(2+)</name>
        <dbReference type="ChEBI" id="CHEBI:18420"/>
        <note>structural</note>
    </ligand>
</feature>
<feature type="binding site" evidence="2">
    <location>
        <position position="335"/>
    </location>
    <ligand>
        <name>Mg(2+)</name>
        <dbReference type="ChEBI" id="CHEBI:18420"/>
        <note>structural</note>
    </ligand>
</feature>
<feature type="binding site" evidence="2">
    <location>
        <position position="336"/>
    </location>
    <ligand>
        <name>Mg(2+)</name>
        <dbReference type="ChEBI" id="CHEBI:18420"/>
        <note>structural</note>
    </ligand>
</feature>
<feature type="binding site" evidence="2">
    <location>
        <position position="337"/>
    </location>
    <ligand>
        <name>Mg(2+)</name>
        <dbReference type="ChEBI" id="CHEBI:18420"/>
        <note>structural</note>
    </ligand>
</feature>
<feature type="binding site" evidence="2">
    <location>
        <position position="340"/>
    </location>
    <ligand>
        <name>Mg(2+)</name>
        <dbReference type="ChEBI" id="CHEBI:18420"/>
        <note>structural</note>
    </ligand>
</feature>
<feature type="site" description="Important for substrate specificity" evidence="2">
    <location>
        <position position="306"/>
    </location>
</feature>
<reference key="1">
    <citation type="journal article" date="2006" name="Genome Biol.">
        <title>The genome of Rhizobium leguminosarum has recognizable core and accessory components.</title>
        <authorList>
            <person name="Young J.P.W."/>
            <person name="Crossman L.C."/>
            <person name="Johnston A.W.B."/>
            <person name="Thomson N.R."/>
            <person name="Ghazoui Z.F."/>
            <person name="Hull K.H."/>
            <person name="Wexler M."/>
            <person name="Curson A.R.J."/>
            <person name="Todd J.D."/>
            <person name="Poole P.S."/>
            <person name="Mauchline T.H."/>
            <person name="East A.K."/>
            <person name="Quail M.A."/>
            <person name="Churcher C."/>
            <person name="Arrowsmith C."/>
            <person name="Cherevach I."/>
            <person name="Chillingworth T."/>
            <person name="Clarke K."/>
            <person name="Cronin A."/>
            <person name="Davis P."/>
            <person name="Fraser A."/>
            <person name="Hance Z."/>
            <person name="Hauser H."/>
            <person name="Jagels K."/>
            <person name="Moule S."/>
            <person name="Mungall K."/>
            <person name="Norbertczak H."/>
            <person name="Rabbinowitsch E."/>
            <person name="Sanders M."/>
            <person name="Simmonds M."/>
            <person name="Whitehead S."/>
            <person name="Parkhill J."/>
        </authorList>
    </citation>
    <scope>NUCLEOTIDE SEQUENCE [LARGE SCALE GENOMIC DNA]</scope>
    <source>
        <strain>DSM 114642 / LMG 32736 / 3841</strain>
    </source>
</reference>
<reference key="2">
    <citation type="journal article" date="2012" name="J. Bacteriol.">
        <title>Defining sequence space and reaction products within the cyanuric acid hydrolase (AtzD)/barbiturase protein family.</title>
        <authorList>
            <person name="Seffernick J.L."/>
            <person name="Erickson J.S."/>
            <person name="Cameron S.M."/>
            <person name="Cho S."/>
            <person name="Dodge A.G."/>
            <person name="Richman J.E."/>
            <person name="Sadowsky M.J."/>
            <person name="Wackett L.P."/>
        </authorList>
    </citation>
    <scope>FUNCTION</scope>
    <scope>CATALYTIC ACTIVITY</scope>
    <scope>BIOPHYSICOCHEMICAL PROPERTIES</scope>
</reference>
<comment type="function">
    <text evidence="2 3">Responsible for the hydrolysis of cyanuric acid, an intermediate formed during catabolism of s-triazine based compounds in herbicides such as atrazine and polymers such as melamine. Catalyzes the hydrolytic opening of the s-triazine ring of cyanuric acid (2,4,6-trihydroxy-s-triazine) to yield carbon dioxide and carboxybiuret, which spontaneously decarboxylates to biuret.</text>
</comment>
<comment type="catalytic activity">
    <reaction evidence="2 3">
        <text>cyanurate + H2O = 1-carboxybiuret + H(+)</text>
        <dbReference type="Rhea" id="RHEA:70363"/>
        <dbReference type="ChEBI" id="CHEBI:15377"/>
        <dbReference type="ChEBI" id="CHEBI:15378"/>
        <dbReference type="ChEBI" id="CHEBI:38028"/>
        <dbReference type="ChEBI" id="CHEBI:142864"/>
        <dbReference type="EC" id="3.5.2.15"/>
    </reaction>
</comment>
<comment type="activity regulation">
    <text evidence="1 2">Inhibited by barbituric acid.</text>
</comment>
<comment type="biophysicochemical properties">
    <kinetics>
        <KM evidence="3">130 uM for cyanuric acid</KM>
        <text evidence="3">kcat is 5 sec(-1) with cyanuric acid as substrate.</text>
    </kinetics>
</comment>
<comment type="pathway">
    <text evidence="2">Xenobiotic degradation; atrazine degradation; biuret from cyanurate: step 1/1.</text>
</comment>
<comment type="subunit">
    <text evidence="1 2">Homotetramer.</text>
</comment>
<comment type="domain">
    <text evidence="2">The monomer structure is formed from three repeating units (RUs) that share the same structure as one another. The monomer, the active site and substrate all possess threefold rotational symmetry, to the extent that the active site possesses three potential Ser-Lys catalytic dyads. It is possible that any or all of the three active-site serines may act as nucleophile (albeit only one can do so per catalytic cycle).</text>
</comment>
<comment type="similarity">
    <text evidence="2 4">Belongs to the cyclic amide hydrolase (CyAH) family.</text>
</comment>
<geneLocation type="plasmid">
    <name>pRL10</name>
</geneLocation>
<keyword id="KW-0378">Hydrolase</keyword>
<keyword id="KW-0460">Magnesium</keyword>
<keyword id="KW-0479">Metal-binding</keyword>
<keyword id="KW-0614">Plasmid</keyword>